<evidence type="ECO:0000255" key="1">
    <source>
        <dbReference type="HAMAP-Rule" id="MF_01333"/>
    </source>
</evidence>
<evidence type="ECO:0000305" key="2"/>
<dbReference type="EMBL" id="CP000481">
    <property type="protein sequence ID" value="ABK52092.1"/>
    <property type="molecule type" value="Genomic_DNA"/>
</dbReference>
<dbReference type="SMR" id="A0LRN2"/>
<dbReference type="FunCoup" id="A0LRN2">
    <property type="interactions" value="335"/>
</dbReference>
<dbReference type="STRING" id="351607.Acel_0318"/>
<dbReference type="KEGG" id="ace:Acel_0318"/>
<dbReference type="eggNOG" id="COG0094">
    <property type="taxonomic scope" value="Bacteria"/>
</dbReference>
<dbReference type="HOGENOM" id="CLU_061015_2_1_11"/>
<dbReference type="InParanoid" id="A0LRN2"/>
<dbReference type="OrthoDB" id="9806626at2"/>
<dbReference type="Proteomes" id="UP000008221">
    <property type="component" value="Chromosome"/>
</dbReference>
<dbReference type="GO" id="GO:1990904">
    <property type="term" value="C:ribonucleoprotein complex"/>
    <property type="evidence" value="ECO:0007669"/>
    <property type="project" value="UniProtKB-KW"/>
</dbReference>
<dbReference type="GO" id="GO:0005840">
    <property type="term" value="C:ribosome"/>
    <property type="evidence" value="ECO:0007669"/>
    <property type="project" value="UniProtKB-KW"/>
</dbReference>
<dbReference type="GO" id="GO:0019843">
    <property type="term" value="F:rRNA binding"/>
    <property type="evidence" value="ECO:0007669"/>
    <property type="project" value="UniProtKB-UniRule"/>
</dbReference>
<dbReference type="GO" id="GO:0003735">
    <property type="term" value="F:structural constituent of ribosome"/>
    <property type="evidence" value="ECO:0007669"/>
    <property type="project" value="InterPro"/>
</dbReference>
<dbReference type="GO" id="GO:0000049">
    <property type="term" value="F:tRNA binding"/>
    <property type="evidence" value="ECO:0007669"/>
    <property type="project" value="UniProtKB-UniRule"/>
</dbReference>
<dbReference type="GO" id="GO:0006412">
    <property type="term" value="P:translation"/>
    <property type="evidence" value="ECO:0007669"/>
    <property type="project" value="UniProtKB-UniRule"/>
</dbReference>
<dbReference type="FunFam" id="3.30.1440.10:FF:000001">
    <property type="entry name" value="50S ribosomal protein L5"/>
    <property type="match status" value="1"/>
</dbReference>
<dbReference type="Gene3D" id="3.30.1440.10">
    <property type="match status" value="1"/>
</dbReference>
<dbReference type="HAMAP" id="MF_01333_B">
    <property type="entry name" value="Ribosomal_uL5_B"/>
    <property type="match status" value="1"/>
</dbReference>
<dbReference type="InterPro" id="IPR002132">
    <property type="entry name" value="Ribosomal_uL5"/>
</dbReference>
<dbReference type="InterPro" id="IPR020930">
    <property type="entry name" value="Ribosomal_uL5_bac-type"/>
</dbReference>
<dbReference type="InterPro" id="IPR031309">
    <property type="entry name" value="Ribosomal_uL5_C"/>
</dbReference>
<dbReference type="InterPro" id="IPR022803">
    <property type="entry name" value="Ribosomal_uL5_dom_sf"/>
</dbReference>
<dbReference type="InterPro" id="IPR031310">
    <property type="entry name" value="Ribosomal_uL5_N"/>
</dbReference>
<dbReference type="NCBIfam" id="NF000585">
    <property type="entry name" value="PRK00010.1"/>
    <property type="match status" value="1"/>
</dbReference>
<dbReference type="PANTHER" id="PTHR11994">
    <property type="entry name" value="60S RIBOSOMAL PROTEIN L11-RELATED"/>
    <property type="match status" value="1"/>
</dbReference>
<dbReference type="Pfam" id="PF00281">
    <property type="entry name" value="Ribosomal_L5"/>
    <property type="match status" value="1"/>
</dbReference>
<dbReference type="Pfam" id="PF00673">
    <property type="entry name" value="Ribosomal_L5_C"/>
    <property type="match status" value="1"/>
</dbReference>
<dbReference type="PIRSF" id="PIRSF002161">
    <property type="entry name" value="Ribosomal_L5"/>
    <property type="match status" value="1"/>
</dbReference>
<dbReference type="SUPFAM" id="SSF55282">
    <property type="entry name" value="RL5-like"/>
    <property type="match status" value="1"/>
</dbReference>
<name>RL5_ACIC1</name>
<keyword id="KW-1185">Reference proteome</keyword>
<keyword id="KW-0687">Ribonucleoprotein</keyword>
<keyword id="KW-0689">Ribosomal protein</keyword>
<keyword id="KW-0694">RNA-binding</keyword>
<keyword id="KW-0699">rRNA-binding</keyword>
<keyword id="KW-0820">tRNA-binding</keyword>
<protein>
    <recommendedName>
        <fullName evidence="1">Large ribosomal subunit protein uL5</fullName>
    </recommendedName>
    <alternativeName>
        <fullName evidence="2">50S ribosomal protein L5</fullName>
    </alternativeName>
</protein>
<gene>
    <name evidence="1" type="primary">rplE</name>
    <name type="ordered locus">Acel_0318</name>
</gene>
<reference key="1">
    <citation type="journal article" date="2009" name="Genome Res.">
        <title>Complete genome of the cellulolytic thermophile Acidothermus cellulolyticus 11B provides insights into its ecophysiological and evolutionary adaptations.</title>
        <authorList>
            <person name="Barabote R.D."/>
            <person name="Xie G."/>
            <person name="Leu D.H."/>
            <person name="Normand P."/>
            <person name="Necsulea A."/>
            <person name="Daubin V."/>
            <person name="Medigue C."/>
            <person name="Adney W.S."/>
            <person name="Xu X.C."/>
            <person name="Lapidus A."/>
            <person name="Parales R.E."/>
            <person name="Detter C."/>
            <person name="Pujic P."/>
            <person name="Bruce D."/>
            <person name="Lavire C."/>
            <person name="Challacombe J.F."/>
            <person name="Brettin T.S."/>
            <person name="Berry A.M."/>
        </authorList>
    </citation>
    <scope>NUCLEOTIDE SEQUENCE [LARGE SCALE GENOMIC DNA]</scope>
    <source>
        <strain>ATCC 43068 / DSM 8971 / 11B</strain>
    </source>
</reference>
<sequence>MTTTHPALTAGRPAGYVPRLKQYYREHVVPALREQFGYRNVMQVPTLVKVVVNMGVGEAARDAKLIEGAVRDIAAITGQRPAIARARKSIAQFKLRAGMAIGAYATVRGDRMWEFLDRMLTLALPRIRDFRGLSPKQFDGHGNYTFGLTEQVMFHEVDQDKLDRFRGMDITVVTTARTDDEGRALLRHLGFPFREN</sequence>
<proteinExistence type="inferred from homology"/>
<accession>A0LRN2</accession>
<organism>
    <name type="scientific">Acidothermus cellulolyticus (strain ATCC 43068 / DSM 8971 / 11B)</name>
    <dbReference type="NCBI Taxonomy" id="351607"/>
    <lineage>
        <taxon>Bacteria</taxon>
        <taxon>Bacillati</taxon>
        <taxon>Actinomycetota</taxon>
        <taxon>Actinomycetes</taxon>
        <taxon>Acidothermales</taxon>
        <taxon>Acidothermaceae</taxon>
        <taxon>Acidothermus</taxon>
    </lineage>
</organism>
<comment type="function">
    <text evidence="1">This is one of the proteins that bind and probably mediate the attachment of the 5S RNA into the large ribosomal subunit, where it forms part of the central protuberance. In the 70S ribosome it contacts protein S13 of the 30S subunit (bridge B1b), connecting the 2 subunits; this bridge is implicated in subunit movement. Contacts the P site tRNA; the 5S rRNA and some of its associated proteins might help stabilize positioning of ribosome-bound tRNAs.</text>
</comment>
<comment type="subunit">
    <text evidence="1">Part of the 50S ribosomal subunit; part of the 5S rRNA/L5/L18/L25 subcomplex. Contacts the 5S rRNA and the P site tRNA. Forms a bridge to the 30S subunit in the 70S ribosome.</text>
</comment>
<comment type="similarity">
    <text evidence="1">Belongs to the universal ribosomal protein uL5 family.</text>
</comment>
<feature type="chain" id="PRO_1000052681" description="Large ribosomal subunit protein uL5">
    <location>
        <begin position="1"/>
        <end position="196"/>
    </location>
</feature>